<sequence length="102" mass="11232">MYAVIKTGGKQYRVAEGQKLRVEKLVGNAGDKVTFSEVLLVGGDSPKIGKPLVSGASVAAEITGQDRGKKIVVFKFRRRKNYRRKNGHRQPYTELKITGITA</sequence>
<keyword id="KW-1185">Reference proteome</keyword>
<keyword id="KW-0687">Ribonucleoprotein</keyword>
<keyword id="KW-0689">Ribosomal protein</keyword>
<keyword id="KW-0694">RNA-binding</keyword>
<keyword id="KW-0699">rRNA-binding</keyword>
<organism>
    <name type="scientific">Sorangium cellulosum (strain So ce56)</name>
    <name type="common">Polyangium cellulosum (strain So ce56)</name>
    <dbReference type="NCBI Taxonomy" id="448385"/>
    <lineage>
        <taxon>Bacteria</taxon>
        <taxon>Pseudomonadati</taxon>
        <taxon>Myxococcota</taxon>
        <taxon>Polyangia</taxon>
        <taxon>Polyangiales</taxon>
        <taxon>Polyangiaceae</taxon>
        <taxon>Sorangium</taxon>
    </lineage>
</organism>
<gene>
    <name evidence="1" type="primary">rplU</name>
    <name type="ordered locus">sce7922</name>
</gene>
<accession>A9FG66</accession>
<name>RL21_SORC5</name>
<feature type="chain" id="PRO_1000087002" description="Large ribosomal subunit protein bL21">
    <location>
        <begin position="1"/>
        <end position="102"/>
    </location>
</feature>
<proteinExistence type="inferred from homology"/>
<reference key="1">
    <citation type="journal article" date="2007" name="Nat. Biotechnol.">
        <title>Complete genome sequence of the myxobacterium Sorangium cellulosum.</title>
        <authorList>
            <person name="Schneiker S."/>
            <person name="Perlova O."/>
            <person name="Kaiser O."/>
            <person name="Gerth K."/>
            <person name="Alici A."/>
            <person name="Altmeyer M.O."/>
            <person name="Bartels D."/>
            <person name="Bekel T."/>
            <person name="Beyer S."/>
            <person name="Bode E."/>
            <person name="Bode H.B."/>
            <person name="Bolten C.J."/>
            <person name="Choudhuri J.V."/>
            <person name="Doss S."/>
            <person name="Elnakady Y.A."/>
            <person name="Frank B."/>
            <person name="Gaigalat L."/>
            <person name="Goesmann A."/>
            <person name="Groeger C."/>
            <person name="Gross F."/>
            <person name="Jelsbak L."/>
            <person name="Jelsbak L."/>
            <person name="Kalinowski J."/>
            <person name="Kegler C."/>
            <person name="Knauber T."/>
            <person name="Konietzny S."/>
            <person name="Kopp M."/>
            <person name="Krause L."/>
            <person name="Krug D."/>
            <person name="Linke B."/>
            <person name="Mahmud T."/>
            <person name="Martinez-Arias R."/>
            <person name="McHardy A.C."/>
            <person name="Merai M."/>
            <person name="Meyer F."/>
            <person name="Mormann S."/>
            <person name="Munoz-Dorado J."/>
            <person name="Perez J."/>
            <person name="Pradella S."/>
            <person name="Rachid S."/>
            <person name="Raddatz G."/>
            <person name="Rosenau F."/>
            <person name="Rueckert C."/>
            <person name="Sasse F."/>
            <person name="Scharfe M."/>
            <person name="Schuster S.C."/>
            <person name="Suen G."/>
            <person name="Treuner-Lange A."/>
            <person name="Velicer G.J."/>
            <person name="Vorholter F.-J."/>
            <person name="Weissman K.J."/>
            <person name="Welch R.D."/>
            <person name="Wenzel S.C."/>
            <person name="Whitworth D.E."/>
            <person name="Wilhelm S."/>
            <person name="Wittmann C."/>
            <person name="Bloecker H."/>
            <person name="Puehler A."/>
            <person name="Mueller R."/>
        </authorList>
    </citation>
    <scope>NUCLEOTIDE SEQUENCE [LARGE SCALE GENOMIC DNA]</scope>
    <source>
        <strain>So ce56</strain>
    </source>
</reference>
<dbReference type="EMBL" id="AM746676">
    <property type="protein sequence ID" value="CAN98092.1"/>
    <property type="molecule type" value="Genomic_DNA"/>
</dbReference>
<dbReference type="RefSeq" id="WP_012240531.1">
    <property type="nucleotide sequence ID" value="NC_010162.1"/>
</dbReference>
<dbReference type="SMR" id="A9FG66"/>
<dbReference type="STRING" id="448385.sce7922"/>
<dbReference type="KEGG" id="scl:sce7922"/>
<dbReference type="eggNOG" id="COG0261">
    <property type="taxonomic scope" value="Bacteria"/>
</dbReference>
<dbReference type="HOGENOM" id="CLU_061463_3_2_7"/>
<dbReference type="OrthoDB" id="9813334at2"/>
<dbReference type="BioCyc" id="SCEL448385:SCE_RS40555-MONOMER"/>
<dbReference type="Proteomes" id="UP000002139">
    <property type="component" value="Chromosome"/>
</dbReference>
<dbReference type="GO" id="GO:0005737">
    <property type="term" value="C:cytoplasm"/>
    <property type="evidence" value="ECO:0007669"/>
    <property type="project" value="UniProtKB-ARBA"/>
</dbReference>
<dbReference type="GO" id="GO:1990904">
    <property type="term" value="C:ribonucleoprotein complex"/>
    <property type="evidence" value="ECO:0007669"/>
    <property type="project" value="UniProtKB-KW"/>
</dbReference>
<dbReference type="GO" id="GO:0005840">
    <property type="term" value="C:ribosome"/>
    <property type="evidence" value="ECO:0007669"/>
    <property type="project" value="UniProtKB-KW"/>
</dbReference>
<dbReference type="GO" id="GO:0019843">
    <property type="term" value="F:rRNA binding"/>
    <property type="evidence" value="ECO:0007669"/>
    <property type="project" value="UniProtKB-UniRule"/>
</dbReference>
<dbReference type="GO" id="GO:0003735">
    <property type="term" value="F:structural constituent of ribosome"/>
    <property type="evidence" value="ECO:0007669"/>
    <property type="project" value="InterPro"/>
</dbReference>
<dbReference type="GO" id="GO:0006412">
    <property type="term" value="P:translation"/>
    <property type="evidence" value="ECO:0007669"/>
    <property type="project" value="UniProtKB-UniRule"/>
</dbReference>
<dbReference type="HAMAP" id="MF_01363">
    <property type="entry name" value="Ribosomal_bL21"/>
    <property type="match status" value="1"/>
</dbReference>
<dbReference type="InterPro" id="IPR028909">
    <property type="entry name" value="bL21-like"/>
</dbReference>
<dbReference type="InterPro" id="IPR036164">
    <property type="entry name" value="bL21-like_sf"/>
</dbReference>
<dbReference type="InterPro" id="IPR001787">
    <property type="entry name" value="Ribosomal_bL21"/>
</dbReference>
<dbReference type="InterPro" id="IPR018258">
    <property type="entry name" value="Ribosomal_bL21_CS"/>
</dbReference>
<dbReference type="NCBIfam" id="TIGR00061">
    <property type="entry name" value="L21"/>
    <property type="match status" value="1"/>
</dbReference>
<dbReference type="PANTHER" id="PTHR21349">
    <property type="entry name" value="50S RIBOSOMAL PROTEIN L21"/>
    <property type="match status" value="1"/>
</dbReference>
<dbReference type="PANTHER" id="PTHR21349:SF0">
    <property type="entry name" value="LARGE RIBOSOMAL SUBUNIT PROTEIN BL21M"/>
    <property type="match status" value="1"/>
</dbReference>
<dbReference type="Pfam" id="PF00829">
    <property type="entry name" value="Ribosomal_L21p"/>
    <property type="match status" value="1"/>
</dbReference>
<dbReference type="SUPFAM" id="SSF141091">
    <property type="entry name" value="L21p-like"/>
    <property type="match status" value="1"/>
</dbReference>
<dbReference type="PROSITE" id="PS01169">
    <property type="entry name" value="RIBOSOMAL_L21"/>
    <property type="match status" value="1"/>
</dbReference>
<protein>
    <recommendedName>
        <fullName evidence="1">Large ribosomal subunit protein bL21</fullName>
    </recommendedName>
    <alternativeName>
        <fullName evidence="2">50S ribosomal protein L21</fullName>
    </alternativeName>
</protein>
<comment type="function">
    <text evidence="1">This protein binds to 23S rRNA in the presence of protein L20.</text>
</comment>
<comment type="subunit">
    <text evidence="1">Part of the 50S ribosomal subunit. Contacts protein L20.</text>
</comment>
<comment type="similarity">
    <text evidence="1">Belongs to the bacterial ribosomal protein bL21 family.</text>
</comment>
<evidence type="ECO:0000255" key="1">
    <source>
        <dbReference type="HAMAP-Rule" id="MF_01363"/>
    </source>
</evidence>
<evidence type="ECO:0000305" key="2"/>